<name>RM11_YEAST</name>
<accession>P36521</accession>
<accession>D6VRF2</accession>
<accession>Q12313</accession>
<feature type="transit peptide" description="Mitochondrion" evidence="5">
    <location>
        <begin position="1"/>
        <end position="31"/>
    </location>
</feature>
<feature type="chain" id="PRO_0000030440" description="Large ribosomal subunit protein uL10m">
    <location>
        <begin position="32"/>
        <end position="249"/>
    </location>
</feature>
<feature type="region of interest" description="Disordered" evidence="1">
    <location>
        <begin position="226"/>
        <end position="249"/>
    </location>
</feature>
<feature type="sequence conflict" description="In Ref. 4; AA sequence." evidence="9" ref="4">
    <original>S</original>
    <variation>H</variation>
    <location>
        <position position="35"/>
    </location>
</feature>
<feature type="sequence conflict" description="In Ref. 4; AA sequence." evidence="9" ref="4">
    <original>T</original>
    <variation>P</variation>
    <location>
        <position position="42"/>
    </location>
</feature>
<feature type="sequence conflict" description="In Ref. 4; AA sequence." evidence="9" ref="4">
    <original>S</original>
    <variation>K</variation>
    <location>
        <position position="48"/>
    </location>
</feature>
<feature type="sequence conflict" description="In Ref. 4; AA sequence." evidence="9" ref="4">
    <original>T</original>
    <variation>V</variation>
    <location>
        <position position="51"/>
    </location>
</feature>
<feature type="sequence conflict" description="In Ref. 4; AA sequence." evidence="9" ref="4">
    <original>T</original>
    <variation>L</variation>
    <location>
        <position position="56"/>
    </location>
</feature>
<feature type="sequence conflict" description="In Ref. 4; AA sequence." evidence="9" ref="4">
    <original>L</original>
    <variation>N</variation>
    <location>
        <position position="60"/>
    </location>
</feature>
<gene>
    <name type="primary">MRPL11</name>
    <name type="ordered locus">YDL202W</name>
    <name type="ORF">D1070</name>
</gene>
<keyword id="KW-0903">Direct protein sequencing</keyword>
<keyword id="KW-0496">Mitochondrion</keyword>
<keyword id="KW-1185">Reference proteome</keyword>
<keyword id="KW-0687">Ribonucleoprotein</keyword>
<keyword id="KW-0689">Ribosomal protein</keyword>
<keyword id="KW-0809">Transit peptide</keyword>
<protein>
    <recommendedName>
        <fullName evidence="8">Large ribosomal subunit protein uL10m</fullName>
    </recommendedName>
    <alternativeName>
        <fullName>54S ribosomal protein L11, mitochondrial</fullName>
    </alternativeName>
    <alternativeName>
        <fullName>YmL11</fullName>
    </alternativeName>
</protein>
<organism>
    <name type="scientific">Saccharomyces cerevisiae (strain ATCC 204508 / S288c)</name>
    <name type="common">Baker's yeast</name>
    <dbReference type="NCBI Taxonomy" id="559292"/>
    <lineage>
        <taxon>Eukaryota</taxon>
        <taxon>Fungi</taxon>
        <taxon>Dikarya</taxon>
        <taxon>Ascomycota</taxon>
        <taxon>Saccharomycotina</taxon>
        <taxon>Saccharomycetes</taxon>
        <taxon>Saccharomycetales</taxon>
        <taxon>Saccharomycetaceae</taxon>
        <taxon>Saccharomyces</taxon>
    </lineage>
</organism>
<proteinExistence type="evidence at protein level"/>
<reference key="1">
    <citation type="journal article" date="1997" name="Yeast">
        <title>The nucleotide sequence of a 39 kb segment of yeast chromosome IV: 12 new open reading frames, nine known genes and one gene for Gly-tRNA.</title>
        <authorList>
            <person name="Bahr A."/>
            <person name="Moeller-Rieker S."/>
            <person name="Hankeln T."/>
            <person name="Kraemer C."/>
            <person name="Protin U."/>
            <person name="Schmidt E.R."/>
        </authorList>
    </citation>
    <scope>NUCLEOTIDE SEQUENCE [GENOMIC DNA]</scope>
    <source>
        <strain>ATCC 96604 / S288c / FY1679</strain>
    </source>
</reference>
<reference key="2">
    <citation type="journal article" date="1997" name="Nature">
        <title>The nucleotide sequence of Saccharomyces cerevisiae chromosome IV.</title>
        <authorList>
            <person name="Jacq C."/>
            <person name="Alt-Moerbe J."/>
            <person name="Andre B."/>
            <person name="Arnold W."/>
            <person name="Bahr A."/>
            <person name="Ballesta J.P.G."/>
            <person name="Bargues M."/>
            <person name="Baron L."/>
            <person name="Becker A."/>
            <person name="Biteau N."/>
            <person name="Bloecker H."/>
            <person name="Blugeon C."/>
            <person name="Boskovic J."/>
            <person name="Brandt P."/>
            <person name="Brueckner M."/>
            <person name="Buitrago M.J."/>
            <person name="Coster F."/>
            <person name="Delaveau T."/>
            <person name="del Rey F."/>
            <person name="Dujon B."/>
            <person name="Eide L.G."/>
            <person name="Garcia-Cantalejo J.M."/>
            <person name="Goffeau A."/>
            <person name="Gomez-Peris A."/>
            <person name="Granotier C."/>
            <person name="Hanemann V."/>
            <person name="Hankeln T."/>
            <person name="Hoheisel J.D."/>
            <person name="Jaeger W."/>
            <person name="Jimenez A."/>
            <person name="Jonniaux J.-L."/>
            <person name="Kraemer C."/>
            <person name="Kuester H."/>
            <person name="Laamanen P."/>
            <person name="Legros Y."/>
            <person name="Louis E.J."/>
            <person name="Moeller-Rieker S."/>
            <person name="Monnet A."/>
            <person name="Moro M."/>
            <person name="Mueller-Auer S."/>
            <person name="Nussbaumer B."/>
            <person name="Paricio N."/>
            <person name="Paulin L."/>
            <person name="Perea J."/>
            <person name="Perez-Alonso M."/>
            <person name="Perez-Ortin J.E."/>
            <person name="Pohl T.M."/>
            <person name="Prydz H."/>
            <person name="Purnelle B."/>
            <person name="Rasmussen S.W."/>
            <person name="Remacha M.A."/>
            <person name="Revuelta J.L."/>
            <person name="Rieger M."/>
            <person name="Salom D."/>
            <person name="Saluz H.P."/>
            <person name="Saiz J.E."/>
            <person name="Saren A.-M."/>
            <person name="Schaefer M."/>
            <person name="Scharfe M."/>
            <person name="Schmidt E.R."/>
            <person name="Schneider C."/>
            <person name="Scholler P."/>
            <person name="Schwarz S."/>
            <person name="Soler-Mira A."/>
            <person name="Urrestarazu L.A."/>
            <person name="Verhasselt P."/>
            <person name="Vissers S."/>
            <person name="Voet M."/>
            <person name="Volckaert G."/>
            <person name="Wagner G."/>
            <person name="Wambutt R."/>
            <person name="Wedler E."/>
            <person name="Wedler H."/>
            <person name="Woelfl S."/>
            <person name="Harris D.E."/>
            <person name="Bowman S."/>
            <person name="Brown D."/>
            <person name="Churcher C.M."/>
            <person name="Connor R."/>
            <person name="Dedman K."/>
            <person name="Gentles S."/>
            <person name="Hamlin N."/>
            <person name="Hunt S."/>
            <person name="Jones L."/>
            <person name="McDonald S."/>
            <person name="Murphy L.D."/>
            <person name="Niblett D."/>
            <person name="Odell C."/>
            <person name="Oliver K."/>
            <person name="Rajandream M.A."/>
            <person name="Richards C."/>
            <person name="Shore L."/>
            <person name="Walsh S.V."/>
            <person name="Barrell B.G."/>
            <person name="Dietrich F.S."/>
            <person name="Mulligan J.T."/>
            <person name="Allen E."/>
            <person name="Araujo R."/>
            <person name="Aviles E."/>
            <person name="Berno A."/>
            <person name="Carpenter J."/>
            <person name="Chen E."/>
            <person name="Cherry J.M."/>
            <person name="Chung E."/>
            <person name="Duncan M."/>
            <person name="Hunicke-Smith S."/>
            <person name="Hyman R.W."/>
            <person name="Komp C."/>
            <person name="Lashkari D."/>
            <person name="Lew H."/>
            <person name="Lin D."/>
            <person name="Mosedale D."/>
            <person name="Nakahara K."/>
            <person name="Namath A."/>
            <person name="Oefner P."/>
            <person name="Oh C."/>
            <person name="Petel F.X."/>
            <person name="Roberts D."/>
            <person name="Schramm S."/>
            <person name="Schroeder M."/>
            <person name="Shogren T."/>
            <person name="Shroff N."/>
            <person name="Winant A."/>
            <person name="Yelton M.A."/>
            <person name="Botstein D."/>
            <person name="Davis R.W."/>
            <person name="Johnston M."/>
            <person name="Andrews S."/>
            <person name="Brinkman R."/>
            <person name="Cooper J."/>
            <person name="Ding H."/>
            <person name="Du Z."/>
            <person name="Favello A."/>
            <person name="Fulton L."/>
            <person name="Gattung S."/>
            <person name="Greco T."/>
            <person name="Hallsworth K."/>
            <person name="Hawkins J."/>
            <person name="Hillier L.W."/>
            <person name="Jier M."/>
            <person name="Johnson D."/>
            <person name="Johnston L."/>
            <person name="Kirsten J."/>
            <person name="Kucaba T."/>
            <person name="Langston Y."/>
            <person name="Latreille P."/>
            <person name="Le T."/>
            <person name="Mardis E."/>
            <person name="Menezes S."/>
            <person name="Miller N."/>
            <person name="Nhan M."/>
            <person name="Pauley A."/>
            <person name="Peluso D."/>
            <person name="Rifkin L."/>
            <person name="Riles L."/>
            <person name="Taich A."/>
            <person name="Trevaskis E."/>
            <person name="Vignati D."/>
            <person name="Wilcox L."/>
            <person name="Wohldman P."/>
            <person name="Vaudin M."/>
            <person name="Wilson R."/>
            <person name="Waterston R."/>
            <person name="Albermann K."/>
            <person name="Hani J."/>
            <person name="Heumann K."/>
            <person name="Kleine K."/>
            <person name="Mewes H.-W."/>
            <person name="Zollner A."/>
            <person name="Zaccaria P."/>
        </authorList>
    </citation>
    <scope>NUCLEOTIDE SEQUENCE [LARGE SCALE GENOMIC DNA]</scope>
    <source>
        <strain>ATCC 204508 / S288c</strain>
    </source>
</reference>
<reference key="3">
    <citation type="journal article" date="2014" name="G3 (Bethesda)">
        <title>The reference genome sequence of Saccharomyces cerevisiae: Then and now.</title>
        <authorList>
            <person name="Engel S.R."/>
            <person name="Dietrich F.S."/>
            <person name="Fisk D.G."/>
            <person name="Binkley G."/>
            <person name="Balakrishnan R."/>
            <person name="Costanzo M.C."/>
            <person name="Dwight S.S."/>
            <person name="Hitz B.C."/>
            <person name="Karra K."/>
            <person name="Nash R.S."/>
            <person name="Weng S."/>
            <person name="Wong E.D."/>
            <person name="Lloyd P."/>
            <person name="Skrzypek M.S."/>
            <person name="Miyasato S.R."/>
            <person name="Simison M."/>
            <person name="Cherry J.M."/>
        </authorList>
    </citation>
    <scope>GENOME REANNOTATION</scope>
    <source>
        <strain>ATCC 204508 / S288c</strain>
    </source>
</reference>
<reference key="4">
    <citation type="journal article" date="1991" name="FEBS Lett.">
        <title>Extended N-terminal sequencing of proteins of the large ribosomal subunit from yeast mitochondria.</title>
        <authorList>
            <person name="Grohmann L."/>
            <person name="Graack H.-R."/>
            <person name="Kruft V."/>
            <person name="Choli T."/>
            <person name="Goldschmidt-Reisin S."/>
            <person name="Kitakawa M."/>
        </authorList>
    </citation>
    <scope>PROTEIN SEQUENCE OF 32-61</scope>
    <scope>SUBUNIT</scope>
    <source>
        <strain>07173</strain>
    </source>
</reference>
<reference key="5">
    <citation type="journal article" date="1997" name="Curr. Genet.">
        <title>The yeast ORF YDL202w codes for the mitochondrial ribosomal protein YmL11.</title>
        <authorList>
            <person name="Bui D.M."/>
            <person name="Jarosch E."/>
            <person name="Schweyen R.J."/>
        </authorList>
    </citation>
    <scope>SUBUNIT</scope>
    <scope>SUBCELLULAR LOCATION</scope>
</reference>
<reference key="6">
    <citation type="journal article" date="2003" name="Nature">
        <title>Global analysis of protein localization in budding yeast.</title>
        <authorList>
            <person name="Huh W.-K."/>
            <person name="Falvo J.V."/>
            <person name="Gerke L.C."/>
            <person name="Carroll A.S."/>
            <person name="Howson R.W."/>
            <person name="Weissman J.S."/>
            <person name="O'Shea E.K."/>
        </authorList>
    </citation>
    <scope>SUBCELLULAR LOCATION [LARGE SCALE ANALYSIS]</scope>
</reference>
<reference key="7">
    <citation type="journal article" date="2003" name="Nature">
        <title>Global analysis of protein expression in yeast.</title>
        <authorList>
            <person name="Ghaemmaghami S."/>
            <person name="Huh W.-K."/>
            <person name="Bower K."/>
            <person name="Howson R.W."/>
            <person name="Belle A."/>
            <person name="Dephoure N."/>
            <person name="O'Shea E.K."/>
            <person name="Weissman J.S."/>
        </authorList>
    </citation>
    <scope>LEVEL OF PROTEIN EXPRESSION [LARGE SCALE ANALYSIS]</scope>
</reference>
<reference key="8">
    <citation type="journal article" date="2003" name="Proc. Natl. Acad. Sci. U.S.A.">
        <title>The proteome of Saccharomyces cerevisiae mitochondria.</title>
        <authorList>
            <person name="Sickmann A."/>
            <person name="Reinders J."/>
            <person name="Wagner Y."/>
            <person name="Joppich C."/>
            <person name="Zahedi R.P."/>
            <person name="Meyer H.E."/>
            <person name="Schoenfisch B."/>
            <person name="Perschil I."/>
            <person name="Chacinska A."/>
            <person name="Guiard B."/>
            <person name="Rehling P."/>
            <person name="Pfanner N."/>
            <person name="Meisinger C."/>
        </authorList>
    </citation>
    <scope>SUBCELLULAR LOCATION [LARGE SCALE ANALYSIS]</scope>
    <source>
        <strain>ATCC 76625 / YPH499</strain>
    </source>
</reference>
<reference key="9">
    <citation type="journal article" date="2014" name="Science">
        <title>Structure of the yeast mitochondrial large ribosomal subunit.</title>
        <authorList>
            <person name="Amunts A."/>
            <person name="Brown A."/>
            <person name="Bai X.C."/>
            <person name="Llacer J.L."/>
            <person name="Hussain T."/>
            <person name="Emsley P."/>
            <person name="Long F."/>
            <person name="Murshudov G."/>
            <person name="Scheres S.H."/>
            <person name="Ramakrishnan V."/>
        </authorList>
    </citation>
    <scope>NOMENCLATURE</scope>
</reference>
<reference key="10">
    <citation type="journal article" date="2015" name="Nat. Commun.">
        <title>Organization of the mitochondrial translation machinery studied in situ by cryoelectron tomography.</title>
        <authorList>
            <person name="Pfeffer S."/>
            <person name="Woellhaf M.W."/>
            <person name="Herrmann J.M."/>
            <person name="Forster F."/>
        </authorList>
    </citation>
    <scope>SUBCELLULAR LOCATION</scope>
</reference>
<evidence type="ECO:0000256" key="1">
    <source>
        <dbReference type="SAM" id="MobiDB-lite"/>
    </source>
</evidence>
<evidence type="ECO:0000269" key="2">
    <source>
    </source>
</evidence>
<evidence type="ECO:0000269" key="3">
    <source>
    </source>
</evidence>
<evidence type="ECO:0000269" key="4">
    <source>
    </source>
</evidence>
<evidence type="ECO:0000269" key="5">
    <source>
    </source>
</evidence>
<evidence type="ECO:0000269" key="6">
    <source>
    </source>
</evidence>
<evidence type="ECO:0000269" key="7">
    <source>
    </source>
</evidence>
<evidence type="ECO:0000303" key="8">
    <source>
    </source>
</evidence>
<evidence type="ECO:0000305" key="9"/>
<evidence type="ECO:0000305" key="10">
    <source>
    </source>
</evidence>
<evidence type="ECO:0000305" key="11">
    <source>
    </source>
</evidence>
<dbReference type="EMBL" id="X99000">
    <property type="protein sequence ID" value="CAA67467.1"/>
    <property type="molecule type" value="Genomic_DNA"/>
</dbReference>
<dbReference type="EMBL" id="Z74250">
    <property type="protein sequence ID" value="CAA98780.1"/>
    <property type="molecule type" value="Genomic_DNA"/>
</dbReference>
<dbReference type="EMBL" id="BK006938">
    <property type="protein sequence ID" value="DAA11662.1"/>
    <property type="molecule type" value="Genomic_DNA"/>
</dbReference>
<dbReference type="PIR" id="S67761">
    <property type="entry name" value="S67761"/>
</dbReference>
<dbReference type="RefSeq" id="NP_010079.1">
    <property type="nucleotide sequence ID" value="NM_001180262.1"/>
</dbReference>
<dbReference type="SMR" id="P36521"/>
<dbReference type="BioGRID" id="31844">
    <property type="interactions" value="161"/>
</dbReference>
<dbReference type="ComplexPortal" id="CPX-1602">
    <property type="entry name" value="54S mitochondrial large ribosomal subunit"/>
</dbReference>
<dbReference type="DIP" id="DIP-5294N"/>
<dbReference type="FunCoup" id="P36521">
    <property type="interactions" value="228"/>
</dbReference>
<dbReference type="IntAct" id="P36521">
    <property type="interactions" value="58"/>
</dbReference>
<dbReference type="MINT" id="P36521"/>
<dbReference type="STRING" id="4932.YDL202W"/>
<dbReference type="CarbonylDB" id="P36521"/>
<dbReference type="iPTMnet" id="P36521"/>
<dbReference type="PaxDb" id="4932-YDL202W"/>
<dbReference type="PeptideAtlas" id="P36521"/>
<dbReference type="EnsemblFungi" id="YDL202W_mRNA">
    <property type="protein sequence ID" value="YDL202W"/>
    <property type="gene ID" value="YDL202W"/>
</dbReference>
<dbReference type="GeneID" id="851325"/>
<dbReference type="KEGG" id="sce:YDL202W"/>
<dbReference type="AGR" id="SGD:S000002361"/>
<dbReference type="SGD" id="S000002361">
    <property type="gene designation" value="MRPL11"/>
</dbReference>
<dbReference type="VEuPathDB" id="FungiDB:YDL202W"/>
<dbReference type="eggNOG" id="ENOG502QRUI">
    <property type="taxonomic scope" value="Eukaryota"/>
</dbReference>
<dbReference type="GeneTree" id="ENSGT00390000000603"/>
<dbReference type="HOGENOM" id="CLU_078018_1_0_1"/>
<dbReference type="InParanoid" id="P36521"/>
<dbReference type="OMA" id="FAHHNNL"/>
<dbReference type="OrthoDB" id="360689at2759"/>
<dbReference type="BioCyc" id="YEAST:G3O-29585-MONOMER"/>
<dbReference type="BioGRID-ORCS" id="851325">
    <property type="hits" value="4 hits in 10 CRISPR screens"/>
</dbReference>
<dbReference type="PRO" id="PR:P36521"/>
<dbReference type="Proteomes" id="UP000002311">
    <property type="component" value="Chromosome IV"/>
</dbReference>
<dbReference type="RNAct" id="P36521">
    <property type="molecule type" value="protein"/>
</dbReference>
<dbReference type="GO" id="GO:0005743">
    <property type="term" value="C:mitochondrial inner membrane"/>
    <property type="evidence" value="ECO:0000303"/>
    <property type="project" value="ComplexPortal"/>
</dbReference>
<dbReference type="GO" id="GO:0005762">
    <property type="term" value="C:mitochondrial large ribosomal subunit"/>
    <property type="evidence" value="ECO:0000314"/>
    <property type="project" value="SGD"/>
</dbReference>
<dbReference type="GO" id="GO:0005739">
    <property type="term" value="C:mitochondrion"/>
    <property type="evidence" value="ECO:0007005"/>
    <property type="project" value="SGD"/>
</dbReference>
<dbReference type="GO" id="GO:0003735">
    <property type="term" value="F:structural constituent of ribosome"/>
    <property type="evidence" value="ECO:0000314"/>
    <property type="project" value="SGD"/>
</dbReference>
<dbReference type="GO" id="GO:0032543">
    <property type="term" value="P:mitochondrial translation"/>
    <property type="evidence" value="ECO:0000303"/>
    <property type="project" value="ComplexPortal"/>
</dbReference>
<dbReference type="GO" id="GO:0006412">
    <property type="term" value="P:translation"/>
    <property type="evidence" value="ECO:0000318"/>
    <property type="project" value="GO_Central"/>
</dbReference>
<dbReference type="CDD" id="cd05797">
    <property type="entry name" value="Ribosomal_L10"/>
    <property type="match status" value="1"/>
</dbReference>
<dbReference type="FunFam" id="3.30.70.1730:FF:000015">
    <property type="entry name" value="Mrpl11p"/>
    <property type="match status" value="1"/>
</dbReference>
<dbReference type="Gene3D" id="3.30.70.1730">
    <property type="match status" value="1"/>
</dbReference>
<dbReference type="InterPro" id="IPR001790">
    <property type="entry name" value="Ribosomal_uL10"/>
</dbReference>
<dbReference type="InterPro" id="IPR043141">
    <property type="entry name" value="Ribosomal_uL10-like_sf"/>
</dbReference>
<dbReference type="InterPro" id="IPR047865">
    <property type="entry name" value="Ribosomal_uL10_bac_type"/>
</dbReference>
<dbReference type="PANTHER" id="PTHR11560">
    <property type="entry name" value="39S RIBOSOMAL PROTEIN L10, MITOCHONDRIAL"/>
    <property type="match status" value="1"/>
</dbReference>
<dbReference type="Pfam" id="PF00466">
    <property type="entry name" value="Ribosomal_L10"/>
    <property type="match status" value="1"/>
</dbReference>
<dbReference type="SUPFAM" id="SSF160369">
    <property type="entry name" value="Ribosomal protein L10-like"/>
    <property type="match status" value="1"/>
</dbReference>
<sequence>MLQLRFMPGWVPRNGFFGLKETIGTVHKRFYALASEQPSRKTVKPLDSRKTFLIDTYKHLMENSSMIFFVHYNNLSKTEDHHFRFKIKQTGGKLTKVRNNLFEVYLRNSHLPDPCGFVKRKEQNWKHPLLPLLKGPTATITYEDTNPQQVAKLLKVLQSAQDKLMVIGAKVENEVLNVEKINTFKTLPTKPEMQSQLVSVLQMLSGLGLVRTLENSSNALYLTLKSHNDNQKPKEDVESTTDAESKGSK</sequence>
<comment type="function">
    <text evidence="10 11">Component of the mitochondrial ribosome (mitoribosome), a dedicated translation machinery responsible for the synthesis of mitochondrial genome-encoded proteins, including at least some of the essential transmembrane subunits of the mitochondrial respiratory chain. The mitoribosomes are attached to the mitochondrial inner membrane and translation products are cotranslationally integrated into the membrane.</text>
</comment>
<comment type="subunit">
    <text evidence="5 7 10">Component of the mitochondrial large ribosomal subunit (mt-LSU) (PubMed:2060626, PubMed:9162110). Mature yeast 74S mitochondrial ribosomes consist of a small (37S) and a large (54S) subunit. The 37S small subunit contains a 15S ribosomal RNA (15S mt-rRNA) and 34 different proteins. The 54S large subunit contains a 21S rRNA (21S mt-rRNA) and 46 different proteins (PubMed:24675956).</text>
</comment>
<comment type="subcellular location">
    <subcellularLocation>
        <location evidence="2 4 7">Mitochondrion</location>
    </subcellularLocation>
    <text evidence="6">Mitoribosomes are tethered to the mitochondrial inner membrane and spatially aligned with the membrane insertion machinery through two distinct membrane contact sites, formed by the 21S rRNA expansion segment 96-ES1 and the inner membrane protein MBA1.</text>
</comment>
<comment type="miscellaneous">
    <text evidence="3">Present with 6000 molecules/cell in log phase SD medium.</text>
</comment>
<comment type="similarity">
    <text evidence="9">Belongs to the universal ribosomal protein uL10 family.</text>
</comment>